<reference key="1">
    <citation type="journal article" date="1996" name="Plant Physiol.">
        <title>Developmental and growth temperature regulation of two different microsomal omega-6 desaturase genes in soybeans.</title>
        <authorList>
            <person name="Heppard E.P."/>
            <person name="Kinney A.J."/>
            <person name="Stecca K.L."/>
            <person name="Miao G.H."/>
        </authorList>
    </citation>
    <scope>NUCLEOTIDE SEQUENCE [MRNA]</scope>
    <source>
        <tissue>Seed</tissue>
    </source>
</reference>
<keyword id="KW-0256">Endoplasmic reticulum</keyword>
<keyword id="KW-0275">Fatty acid biosynthesis</keyword>
<keyword id="KW-0276">Fatty acid metabolism</keyword>
<keyword id="KW-0444">Lipid biosynthesis</keyword>
<keyword id="KW-0443">Lipid metabolism</keyword>
<keyword id="KW-0472">Membrane</keyword>
<keyword id="KW-0560">Oxidoreductase</keyword>
<keyword id="KW-1185">Reference proteome</keyword>
<keyword id="KW-0812">Transmembrane</keyword>
<keyword id="KW-1133">Transmembrane helix</keyword>
<protein>
    <recommendedName>
        <fullName>Omega-6 fatty acid desaturase, endoplasmic reticulum isozyme 1</fullName>
        <ecNumber>1.14.19.-</ecNumber>
    </recommendedName>
</protein>
<evidence type="ECO:0000255" key="1"/>
<evidence type="ECO:0000305" key="2"/>
<sequence>MGLAKETTMGGRGRVAKVEVQGKKPLSRVPNTKPPFTVGQLKKAIPPHCFQRSLLTSFSYVVYDLSFAFIFYIATTYFHLLPQPFSLIAWPIYWVLQGCLLTGVWVIAHECGHHAFSKYQWVDDVVGLTLHSTLLVPYFSWKISHRRHHSNTGSLDRDEVFVPKPKSKVAWFSKYLNNPLGRAVSLLVTLTIGWPMYLAFNVSGRPYDSFASHYHPYAPIYSNRERLLIYVSDVALFSVTYSLYRVATLKGLVWLLCVYGVPLLIVNGFLVTITYLQHTHFALPHYDSSEWDWLKGALATMDRDYGILNKVFHHITDTHVAHHLFSTMPHYHAMEATNAIKPILGEYYQFDDTPFYKALWREARECLYVEPDEGTSEKGVYWYRNKY</sequence>
<feature type="chain" id="PRO_0000185420" description="Omega-6 fatty acid desaturase, endoplasmic reticulum isozyme 1">
    <location>
        <begin position="1"/>
        <end position="387"/>
    </location>
</feature>
<feature type="transmembrane region" description="Helical" evidence="1">
    <location>
        <begin position="54"/>
        <end position="74"/>
    </location>
</feature>
<feature type="transmembrane region" description="Helical" evidence="1">
    <location>
        <begin position="87"/>
        <end position="107"/>
    </location>
</feature>
<feature type="transmembrane region" description="Helical" evidence="1">
    <location>
        <begin position="121"/>
        <end position="141"/>
    </location>
</feature>
<feature type="transmembrane region" description="Helical" evidence="1">
    <location>
        <begin position="183"/>
        <end position="203"/>
    </location>
</feature>
<feature type="transmembrane region" description="Helical" evidence="1">
    <location>
        <begin position="227"/>
        <end position="247"/>
    </location>
</feature>
<feature type="transmembrane region" description="Helical" evidence="1">
    <location>
        <begin position="251"/>
        <end position="271"/>
    </location>
</feature>
<feature type="short sequence motif" description="Histidine box-1">
    <location>
        <begin position="109"/>
        <end position="113"/>
    </location>
</feature>
<feature type="short sequence motif" description="Histidine box-2">
    <location>
        <begin position="145"/>
        <end position="149"/>
    </location>
</feature>
<feature type="short sequence motif" description="Histidine box-3">
    <location>
        <begin position="319"/>
        <end position="323"/>
    </location>
</feature>
<proteinExistence type="evidence at transcript level"/>
<name>FD6E1_SOYBN</name>
<dbReference type="EC" id="1.14.19.-"/>
<dbReference type="EMBL" id="L43920">
    <property type="protein sequence ID" value="AAB00859.1"/>
    <property type="molecule type" value="mRNA"/>
</dbReference>
<dbReference type="PIR" id="T07687">
    <property type="entry name" value="T07687"/>
</dbReference>
<dbReference type="RefSeq" id="NP_001238342.1">
    <property type="nucleotide sequence ID" value="NM_001251413.1"/>
</dbReference>
<dbReference type="RefSeq" id="XP_006588506.1">
    <property type="nucleotide sequence ID" value="XM_006588443.1"/>
</dbReference>
<dbReference type="SMR" id="P48630"/>
<dbReference type="STRING" id="3847.P48630"/>
<dbReference type="iPTMnet" id="P48630"/>
<dbReference type="PaxDb" id="3847-GLYMA10G42470.1"/>
<dbReference type="EnsemblPlants" id="KRH36003">
    <property type="protein sequence ID" value="KRH36003"/>
    <property type="gene ID" value="GLYMA_10G278000"/>
</dbReference>
<dbReference type="EnsemblPlants" id="KRH36004">
    <property type="protein sequence ID" value="KRH36004"/>
    <property type="gene ID" value="GLYMA_10G278000"/>
</dbReference>
<dbReference type="GeneID" id="547814"/>
<dbReference type="Gramene" id="KRH36003">
    <property type="protein sequence ID" value="KRH36003"/>
    <property type="gene ID" value="GLYMA_10G278000"/>
</dbReference>
<dbReference type="Gramene" id="KRH36004">
    <property type="protein sequence ID" value="KRH36004"/>
    <property type="gene ID" value="GLYMA_10G278000"/>
</dbReference>
<dbReference type="KEGG" id="gmx:547814"/>
<dbReference type="eggNOG" id="ENOG502QQNB">
    <property type="taxonomic scope" value="Eukaryota"/>
</dbReference>
<dbReference type="HOGENOM" id="CLU_033094_0_1_1"/>
<dbReference type="InParanoid" id="P48630"/>
<dbReference type="OMA" id="MEATNAM"/>
<dbReference type="OrthoDB" id="1461976at2759"/>
<dbReference type="UniPathway" id="UPA00658"/>
<dbReference type="Proteomes" id="UP000008827">
    <property type="component" value="Chromosome 10"/>
</dbReference>
<dbReference type="GO" id="GO:0005789">
    <property type="term" value="C:endoplasmic reticulum membrane"/>
    <property type="evidence" value="ECO:0007669"/>
    <property type="project" value="UniProtKB-SubCell"/>
</dbReference>
<dbReference type="GO" id="GO:0016491">
    <property type="term" value="F:oxidoreductase activity"/>
    <property type="evidence" value="ECO:0000318"/>
    <property type="project" value="GO_Central"/>
</dbReference>
<dbReference type="GO" id="GO:0006636">
    <property type="term" value="P:unsaturated fatty acid biosynthetic process"/>
    <property type="evidence" value="ECO:0007669"/>
    <property type="project" value="UniProtKB-UniPathway"/>
</dbReference>
<dbReference type="CDD" id="cd03507">
    <property type="entry name" value="Delta12-FADS-like"/>
    <property type="match status" value="1"/>
</dbReference>
<dbReference type="InterPro" id="IPR005804">
    <property type="entry name" value="FA_desaturase_dom"/>
</dbReference>
<dbReference type="InterPro" id="IPR012171">
    <property type="entry name" value="Fatty_acid_desaturase"/>
</dbReference>
<dbReference type="PANTHER" id="PTHR32100">
    <property type="entry name" value="OMEGA-6 FATTY ACID DESATURASE, CHLOROPLASTIC"/>
    <property type="match status" value="1"/>
</dbReference>
<dbReference type="Pfam" id="PF00487">
    <property type="entry name" value="FA_desaturase"/>
    <property type="match status" value="1"/>
</dbReference>
<comment type="function">
    <text>ER (microsomal) omega-6 fatty acid desaturase introduces the second double bond in the biosynthesis of 18:3 fatty acids, important constituents of plant membranes. It is thought to use cytochrome b5 as an electron donor and to act on fatty acids esterified to phosphatidylcholine and, possibly, other phospholipids.</text>
</comment>
<comment type="pathway">
    <text>Lipid metabolism; polyunsaturated fatty acid biosynthesis.</text>
</comment>
<comment type="subcellular location">
    <subcellularLocation>
        <location>Endoplasmic reticulum membrane</location>
        <topology>Multi-pass membrane protein</topology>
    </subcellularLocation>
</comment>
<comment type="tissue specificity">
    <text>Strongly expressed in developing seeds.</text>
</comment>
<comment type="domain">
    <text>The histidine box domains may contain the active site and/or be involved in metal ion binding.</text>
</comment>
<comment type="similarity">
    <text evidence="2">Belongs to the fatty acid desaturase type 1 family.</text>
</comment>
<organism>
    <name type="scientific">Glycine max</name>
    <name type="common">Soybean</name>
    <name type="synonym">Glycine hispida</name>
    <dbReference type="NCBI Taxonomy" id="3847"/>
    <lineage>
        <taxon>Eukaryota</taxon>
        <taxon>Viridiplantae</taxon>
        <taxon>Streptophyta</taxon>
        <taxon>Embryophyta</taxon>
        <taxon>Tracheophyta</taxon>
        <taxon>Spermatophyta</taxon>
        <taxon>Magnoliopsida</taxon>
        <taxon>eudicotyledons</taxon>
        <taxon>Gunneridae</taxon>
        <taxon>Pentapetalae</taxon>
        <taxon>rosids</taxon>
        <taxon>fabids</taxon>
        <taxon>Fabales</taxon>
        <taxon>Fabaceae</taxon>
        <taxon>Papilionoideae</taxon>
        <taxon>50 kb inversion clade</taxon>
        <taxon>NPAAA clade</taxon>
        <taxon>indigoferoid/millettioid clade</taxon>
        <taxon>Phaseoleae</taxon>
        <taxon>Glycine</taxon>
        <taxon>Glycine subgen. Soja</taxon>
    </lineage>
</organism>
<gene>
    <name type="primary">FAD2-1</name>
</gene>
<accession>P48630</accession>